<dbReference type="GO" id="GO:0005576">
    <property type="term" value="C:extracellular region"/>
    <property type="evidence" value="ECO:0007669"/>
    <property type="project" value="UniProtKB-SubCell"/>
</dbReference>
<dbReference type="GO" id="GO:0007218">
    <property type="term" value="P:neuropeptide signaling pathway"/>
    <property type="evidence" value="ECO:0007669"/>
    <property type="project" value="UniProtKB-KW"/>
</dbReference>
<organism>
    <name type="scientific">Hirudo medicinalis</name>
    <name type="common">Medicinal leech</name>
    <dbReference type="NCBI Taxonomy" id="6421"/>
    <lineage>
        <taxon>Eukaryota</taxon>
        <taxon>Metazoa</taxon>
        <taxon>Spiralia</taxon>
        <taxon>Lophotrochozoa</taxon>
        <taxon>Annelida</taxon>
        <taxon>Clitellata</taxon>
        <taxon>Hirudinea</taxon>
        <taxon>Hirudinida</taxon>
        <taxon>Hirudiniformes</taxon>
        <taxon>Hirudinidae</taxon>
        <taxon>Hirudo</taxon>
    </lineage>
</organism>
<keyword id="KW-0027">Amidation</keyword>
<keyword id="KW-0903">Direct protein sequencing</keyword>
<keyword id="KW-0527">Neuropeptide</keyword>
<keyword id="KW-0964">Secreted</keyword>
<feature type="peptide" id="PRO_0000043681" description="FMRFamide-like neuropeptide GGKYMRF-amide">
    <location>
        <begin position="1"/>
        <end position="7"/>
    </location>
</feature>
<feature type="modified residue" description="Phenylalanine amide" evidence="1">
    <location>
        <position position="7"/>
    </location>
</feature>
<reference key="1">
    <citation type="journal article" date="1991" name="Peptides">
        <title>Identification of RFamide neuropeptides in the medicinal leech.</title>
        <authorList>
            <person name="Evans B.D."/>
            <person name="Pohl J."/>
            <person name="Kartsonis M.A."/>
            <person name="Calabrese R.L."/>
        </authorList>
    </citation>
    <scope>PROTEIN SEQUENCE</scope>
    <scope>AMIDATION AT PHE-7</scope>
</reference>
<comment type="subcellular location">
    <subcellularLocation>
        <location>Secreted</location>
    </subcellularLocation>
</comment>
<comment type="similarity">
    <text evidence="2">Belongs to the FARP (FMRFamide related peptide) family.</text>
</comment>
<protein>
    <recommendedName>
        <fullName>FMRFamide-like neuropeptide GGKYMRF-amide</fullName>
    </recommendedName>
</protein>
<sequence length="7" mass="858">GGKYMRF</sequence>
<accession>P42564</accession>
<proteinExistence type="evidence at protein level"/>
<name>FAR5_HIRME</name>
<evidence type="ECO:0000269" key="1">
    <source>
    </source>
</evidence>
<evidence type="ECO:0000305" key="2"/>